<protein>
    <recommendedName>
        <fullName>Kallikrein-8</fullName>
        <ecNumber>3.4.21.118</ecNumber>
    </recommendedName>
    <alternativeName>
        <fullName>Brain serine protease 1</fullName>
    </alternativeName>
    <alternativeName>
        <fullName>Neuropsin</fullName>
        <shortName>NP</shortName>
    </alternativeName>
    <alternativeName>
        <fullName>Serine protease 19</fullName>
    </alternativeName>
</protein>
<comment type="function">
    <text evidence="1">Serine protease which is capable of degrading a number of proteins such as casein, fibrinogen, kininogen, fibronectin and collagen type IV. Also cleaves L1CAM in response to increased neural activity. Induces neurite outgrowth and fasciculation of cultured hippocampal neurons. Plays a role in the formation and maturation of orphan and small synaptic boutons in the Schaffer-collateral pathway, regulates Schaffer-collateral long-term potentiation in the hippocampus and is required for memory acquisition and synaptic plasticity. Involved in skin desquamation and keratinocyte proliferation. Plays a role in the secondary phase of pathogenesis following spinal cord injury (By similarity).</text>
</comment>
<comment type="catalytic activity">
    <reaction>
        <text>Cleavage of amide substrates following the basic amino acids Arg or Lys at the P1 position, with a preference for Arg over Lys.</text>
        <dbReference type="EC" id="3.4.21.118"/>
    </reaction>
</comment>
<comment type="subunit">
    <text evidence="1">Interacts with SPINK9.</text>
</comment>
<comment type="subcellular location">
    <subcellularLocation>
        <location evidence="1">Secreted</location>
    </subcellularLocation>
    <subcellularLocation>
        <location evidence="1">Cytoplasm</location>
    </subcellularLocation>
    <text evidence="1">Shows a cytoplasmic distribution in the keratinocytes.</text>
</comment>
<comment type="tissue specificity">
    <text>Restricted to hippocampus.</text>
</comment>
<comment type="similarity">
    <text evidence="3">Belongs to the peptidase S1 family. Kallikrein subfamily.</text>
</comment>
<dbReference type="EC" id="3.4.21.118"/>
<dbReference type="EMBL" id="AJ005641">
    <property type="protein sequence ID" value="CAA06643.1"/>
    <property type="molecule type" value="mRNA"/>
</dbReference>
<dbReference type="SMR" id="O88780"/>
<dbReference type="FunCoup" id="O88780">
    <property type="interactions" value="33"/>
</dbReference>
<dbReference type="STRING" id="10116.ENSRNOP00000025174"/>
<dbReference type="MEROPS" id="S01.244"/>
<dbReference type="CarbonylDB" id="O88780"/>
<dbReference type="GlyCosmos" id="O88780">
    <property type="glycosylation" value="1 site, No reported glycans"/>
</dbReference>
<dbReference type="GlyGen" id="O88780">
    <property type="glycosylation" value="1 site"/>
</dbReference>
<dbReference type="PhosphoSitePlus" id="O88780"/>
<dbReference type="PaxDb" id="10116-ENSRNOP00000025174"/>
<dbReference type="UCSC" id="RGD:1305998">
    <property type="organism name" value="rat"/>
</dbReference>
<dbReference type="AGR" id="RGD:1305998"/>
<dbReference type="RGD" id="1305998">
    <property type="gene designation" value="Klk8"/>
</dbReference>
<dbReference type="eggNOG" id="KOG3627">
    <property type="taxonomic scope" value="Eukaryota"/>
</dbReference>
<dbReference type="InParanoid" id="O88780"/>
<dbReference type="PhylomeDB" id="O88780"/>
<dbReference type="BRENDA" id="3.4.21.118">
    <property type="organism ID" value="5301"/>
</dbReference>
<dbReference type="Reactome" id="R-RNO-6809371">
    <property type="pathway name" value="Formation of the cornified envelope"/>
</dbReference>
<dbReference type="PRO" id="PR:O88780"/>
<dbReference type="Proteomes" id="UP000002494">
    <property type="component" value="Unplaced"/>
</dbReference>
<dbReference type="GO" id="GO:0005737">
    <property type="term" value="C:cytoplasm"/>
    <property type="evidence" value="ECO:0000266"/>
    <property type="project" value="RGD"/>
</dbReference>
<dbReference type="GO" id="GO:0005615">
    <property type="term" value="C:extracellular space"/>
    <property type="evidence" value="ECO:0000250"/>
    <property type="project" value="UniProtKB"/>
</dbReference>
<dbReference type="GO" id="GO:0030141">
    <property type="term" value="C:secretory granule"/>
    <property type="evidence" value="ECO:0000318"/>
    <property type="project" value="GO_Central"/>
</dbReference>
<dbReference type="GO" id="GO:0097180">
    <property type="term" value="C:serine protease inhibitor complex"/>
    <property type="evidence" value="ECO:0000266"/>
    <property type="project" value="RGD"/>
</dbReference>
<dbReference type="GO" id="GO:0008233">
    <property type="term" value="F:peptidase activity"/>
    <property type="evidence" value="ECO:0000266"/>
    <property type="project" value="RGD"/>
</dbReference>
<dbReference type="GO" id="GO:0004252">
    <property type="term" value="F:serine-type endopeptidase activity"/>
    <property type="evidence" value="ECO:0000250"/>
    <property type="project" value="UniProtKB"/>
</dbReference>
<dbReference type="GO" id="GO:0043616">
    <property type="term" value="P:keratinocyte proliferation"/>
    <property type="evidence" value="ECO:0000250"/>
    <property type="project" value="UniProtKB"/>
</dbReference>
<dbReference type="GO" id="GO:0007613">
    <property type="term" value="P:memory"/>
    <property type="evidence" value="ECO:0000250"/>
    <property type="project" value="UniProtKB"/>
</dbReference>
<dbReference type="GO" id="GO:0048812">
    <property type="term" value="P:neuron projection morphogenesis"/>
    <property type="evidence" value="ECO:0000250"/>
    <property type="project" value="UniProtKB"/>
</dbReference>
<dbReference type="GO" id="GO:0051604">
    <property type="term" value="P:protein maturation"/>
    <property type="evidence" value="ECO:0000318"/>
    <property type="project" value="GO_Central"/>
</dbReference>
<dbReference type="GO" id="GO:0006508">
    <property type="term" value="P:proteolysis"/>
    <property type="evidence" value="ECO:0007669"/>
    <property type="project" value="UniProtKB-KW"/>
</dbReference>
<dbReference type="GO" id="GO:0050807">
    <property type="term" value="P:regulation of synapse organization"/>
    <property type="evidence" value="ECO:0000250"/>
    <property type="project" value="UniProtKB"/>
</dbReference>
<dbReference type="GO" id="GO:0009611">
    <property type="term" value="P:response to wounding"/>
    <property type="evidence" value="ECO:0000250"/>
    <property type="project" value="UniProtKB"/>
</dbReference>
<dbReference type="GO" id="GO:0050808">
    <property type="term" value="P:synapse organization"/>
    <property type="evidence" value="ECO:0000266"/>
    <property type="project" value="RGD"/>
</dbReference>
<dbReference type="CDD" id="cd00190">
    <property type="entry name" value="Tryp_SPc"/>
    <property type="match status" value="1"/>
</dbReference>
<dbReference type="FunFam" id="2.40.10.10:FF:000087">
    <property type="entry name" value="Kallikrein 8 (Neuropsin/ovasin)"/>
    <property type="match status" value="1"/>
</dbReference>
<dbReference type="FunFam" id="2.40.10.10:FF:000041">
    <property type="entry name" value="kallikrein-6 isoform X2"/>
    <property type="match status" value="1"/>
</dbReference>
<dbReference type="Gene3D" id="2.40.10.10">
    <property type="entry name" value="Trypsin-like serine proteases"/>
    <property type="match status" value="2"/>
</dbReference>
<dbReference type="InterPro" id="IPR009003">
    <property type="entry name" value="Peptidase_S1_PA"/>
</dbReference>
<dbReference type="InterPro" id="IPR043504">
    <property type="entry name" value="Peptidase_S1_PA_chymotrypsin"/>
</dbReference>
<dbReference type="InterPro" id="IPR001314">
    <property type="entry name" value="Peptidase_S1A"/>
</dbReference>
<dbReference type="InterPro" id="IPR001254">
    <property type="entry name" value="Trypsin_dom"/>
</dbReference>
<dbReference type="InterPro" id="IPR018114">
    <property type="entry name" value="TRYPSIN_HIS"/>
</dbReference>
<dbReference type="InterPro" id="IPR033116">
    <property type="entry name" value="TRYPSIN_SER"/>
</dbReference>
<dbReference type="PANTHER" id="PTHR24271:SF62">
    <property type="entry name" value="KALLIKREIN-8"/>
    <property type="match status" value="1"/>
</dbReference>
<dbReference type="PANTHER" id="PTHR24271">
    <property type="entry name" value="KALLIKREIN-RELATED"/>
    <property type="match status" value="1"/>
</dbReference>
<dbReference type="Pfam" id="PF00089">
    <property type="entry name" value="Trypsin"/>
    <property type="match status" value="1"/>
</dbReference>
<dbReference type="PRINTS" id="PR00722">
    <property type="entry name" value="CHYMOTRYPSIN"/>
</dbReference>
<dbReference type="SMART" id="SM00020">
    <property type="entry name" value="Tryp_SPc"/>
    <property type="match status" value="1"/>
</dbReference>
<dbReference type="SUPFAM" id="SSF50494">
    <property type="entry name" value="Trypsin-like serine proteases"/>
    <property type="match status" value="1"/>
</dbReference>
<dbReference type="PROSITE" id="PS50240">
    <property type="entry name" value="TRYPSIN_DOM"/>
    <property type="match status" value="1"/>
</dbReference>
<dbReference type="PROSITE" id="PS00134">
    <property type="entry name" value="TRYPSIN_HIS"/>
    <property type="match status" value="1"/>
</dbReference>
<dbReference type="PROSITE" id="PS00135">
    <property type="entry name" value="TRYPSIN_SER"/>
    <property type="match status" value="1"/>
</dbReference>
<organism>
    <name type="scientific">Rattus norvegicus</name>
    <name type="common">Rat</name>
    <dbReference type="NCBI Taxonomy" id="10116"/>
    <lineage>
        <taxon>Eukaryota</taxon>
        <taxon>Metazoa</taxon>
        <taxon>Chordata</taxon>
        <taxon>Craniata</taxon>
        <taxon>Vertebrata</taxon>
        <taxon>Euteleostomi</taxon>
        <taxon>Mammalia</taxon>
        <taxon>Eutheria</taxon>
        <taxon>Euarchontoglires</taxon>
        <taxon>Glires</taxon>
        <taxon>Rodentia</taxon>
        <taxon>Myomorpha</taxon>
        <taxon>Muroidea</taxon>
        <taxon>Muridae</taxon>
        <taxon>Murinae</taxon>
        <taxon>Rattus</taxon>
    </lineage>
</organism>
<reference key="1">
    <citation type="journal article" date="1998" name="J. Biol. Chem.">
        <title>Serine proteases in rodent hippocampus.</title>
        <authorList>
            <person name="Davies B.J."/>
            <person name="Pickard B.S."/>
            <person name="Steel M."/>
            <person name="Morris R.G.M."/>
            <person name="Lathe R."/>
        </authorList>
    </citation>
    <scope>NUCLEOTIDE SEQUENCE [MRNA]</scope>
    <source>
        <strain>Fischer</strain>
        <tissue>Brain</tissue>
    </source>
</reference>
<name>KLK8_RAT</name>
<proteinExistence type="evidence at transcript level"/>
<sequence>MGRPPPCAIQTWILLFLLMGAWAGLTRAQGSKILEGQECKPHSQPWQTALFQGERLVCGGVLVGDRWVLTAAHCKKDKYSVRLGDHSLQKRDEPEQEIQVARSIQHPCFNSSNPEDHSHDIMLIRLQNSANLGDKVKPIELANLCPKVGQKCIISGWGTVTSPQENFPNTLNCAEVKIYSQNKCERAYPGKITEGMVCAGSSNGADTCQGDSGGPLVCNGVLQGITTWGSDPCGKPEKPGVYTKICRYTNWIKKTMGKRD</sequence>
<accession>O88780</accession>
<gene>
    <name type="primary">Klk8</name>
    <name type="synonym">Bsp1</name>
    <name type="synonym">Nrpn</name>
    <name type="synonym">Prss19</name>
</gene>
<feature type="signal peptide" evidence="2">
    <location>
        <begin position="1"/>
        <end position="28"/>
    </location>
</feature>
<feature type="propeptide" id="PRO_0000027950" evidence="1">
    <location>
        <begin position="29"/>
        <end position="32"/>
    </location>
</feature>
<feature type="chain" id="PRO_0000027951" description="Kallikrein-8">
    <location>
        <begin position="33"/>
        <end position="260"/>
    </location>
</feature>
<feature type="domain" description="Peptidase S1" evidence="3">
    <location>
        <begin position="33"/>
        <end position="257"/>
    </location>
</feature>
<feature type="active site" description="Charge relay system" evidence="1">
    <location>
        <position position="73"/>
    </location>
</feature>
<feature type="active site" description="Charge relay system" evidence="1">
    <location>
        <position position="120"/>
    </location>
</feature>
<feature type="active site" description="Charge relay system" evidence="1">
    <location>
        <position position="212"/>
    </location>
</feature>
<feature type="glycosylation site" description="N-linked (GlcNAc...) asparagine" evidence="2">
    <location>
        <position position="110"/>
    </location>
</feature>
<feature type="disulfide bond" evidence="3">
    <location>
        <begin position="39"/>
        <end position="173"/>
    </location>
</feature>
<feature type="disulfide bond" evidence="3">
    <location>
        <begin position="58"/>
        <end position="74"/>
    </location>
</feature>
<feature type="disulfide bond" evidence="3">
    <location>
        <begin position="145"/>
        <end position="246"/>
    </location>
</feature>
<feature type="disulfide bond" evidence="3">
    <location>
        <begin position="152"/>
        <end position="218"/>
    </location>
</feature>
<feature type="disulfide bond" evidence="3">
    <location>
        <begin position="184"/>
        <end position="198"/>
    </location>
</feature>
<feature type="disulfide bond" evidence="3">
    <location>
        <begin position="208"/>
        <end position="233"/>
    </location>
</feature>
<evidence type="ECO:0000250" key="1"/>
<evidence type="ECO:0000255" key="2"/>
<evidence type="ECO:0000255" key="3">
    <source>
        <dbReference type="PROSITE-ProRule" id="PRU00274"/>
    </source>
</evidence>
<keyword id="KW-0963">Cytoplasm</keyword>
<keyword id="KW-1015">Disulfide bond</keyword>
<keyword id="KW-0325">Glycoprotein</keyword>
<keyword id="KW-0378">Hydrolase</keyword>
<keyword id="KW-0645">Protease</keyword>
<keyword id="KW-1185">Reference proteome</keyword>
<keyword id="KW-0964">Secreted</keyword>
<keyword id="KW-0720">Serine protease</keyword>
<keyword id="KW-0732">Signal</keyword>
<keyword id="KW-0865">Zymogen</keyword>